<evidence type="ECO:0000250" key="1"/>
<evidence type="ECO:0000255" key="2">
    <source>
        <dbReference type="HAMAP-Rule" id="MF_01303"/>
    </source>
</evidence>
<protein>
    <recommendedName>
        <fullName evidence="2">Photosystem I iron-sulfur center</fullName>
        <ecNumber evidence="2">1.97.1.12</ecNumber>
    </recommendedName>
    <alternativeName>
        <fullName evidence="2">9 kDa polypeptide</fullName>
    </alternativeName>
    <alternativeName>
        <fullName evidence="2">PSI-C</fullName>
    </alternativeName>
    <alternativeName>
        <fullName evidence="2">Photosystem I subunit VII</fullName>
    </alternativeName>
    <alternativeName>
        <fullName evidence="2">PsaC</fullName>
    </alternativeName>
</protein>
<proteinExistence type="inferred from homology"/>
<name>PSAC_ACOCL</name>
<accession>Q3V4Y3</accession>
<sequence length="81" mass="8912">MSHSVKIYDTCIGCTQCVRACPTDVLEMIPWDGCKAKQIASAPRTEDCVGCKRCESACPTDFLSVRVYLGNETTRSMGLPY</sequence>
<dbReference type="EC" id="1.97.1.12" evidence="2"/>
<dbReference type="EMBL" id="AJ879453">
    <property type="protein sequence ID" value="CAI53845.1"/>
    <property type="molecule type" value="Genomic_DNA"/>
</dbReference>
<dbReference type="RefSeq" id="YP_319814.1">
    <property type="nucleotide sequence ID" value="NC_007407.1"/>
</dbReference>
<dbReference type="SMR" id="Q3V4Y3"/>
<dbReference type="GeneID" id="3677497"/>
<dbReference type="GO" id="GO:0009535">
    <property type="term" value="C:chloroplast thylakoid membrane"/>
    <property type="evidence" value="ECO:0007669"/>
    <property type="project" value="UniProtKB-SubCell"/>
</dbReference>
<dbReference type="GO" id="GO:0009522">
    <property type="term" value="C:photosystem I"/>
    <property type="evidence" value="ECO:0007669"/>
    <property type="project" value="UniProtKB-KW"/>
</dbReference>
<dbReference type="GO" id="GO:0051539">
    <property type="term" value="F:4 iron, 4 sulfur cluster binding"/>
    <property type="evidence" value="ECO:0007669"/>
    <property type="project" value="UniProtKB-KW"/>
</dbReference>
<dbReference type="GO" id="GO:0009055">
    <property type="term" value="F:electron transfer activity"/>
    <property type="evidence" value="ECO:0007669"/>
    <property type="project" value="UniProtKB-UniRule"/>
</dbReference>
<dbReference type="GO" id="GO:0046872">
    <property type="term" value="F:metal ion binding"/>
    <property type="evidence" value="ECO:0007669"/>
    <property type="project" value="UniProtKB-KW"/>
</dbReference>
<dbReference type="GO" id="GO:0016491">
    <property type="term" value="F:oxidoreductase activity"/>
    <property type="evidence" value="ECO:0007669"/>
    <property type="project" value="UniProtKB-KW"/>
</dbReference>
<dbReference type="GO" id="GO:0009773">
    <property type="term" value="P:photosynthetic electron transport in photosystem I"/>
    <property type="evidence" value="ECO:0007669"/>
    <property type="project" value="InterPro"/>
</dbReference>
<dbReference type="FunFam" id="3.30.70.20:FF:000001">
    <property type="entry name" value="Photosystem I iron-sulfur center"/>
    <property type="match status" value="1"/>
</dbReference>
<dbReference type="Gene3D" id="3.30.70.20">
    <property type="match status" value="1"/>
</dbReference>
<dbReference type="HAMAP" id="MF_01303">
    <property type="entry name" value="PSI_PsaC"/>
    <property type="match status" value="1"/>
</dbReference>
<dbReference type="InterPro" id="IPR017896">
    <property type="entry name" value="4Fe4S_Fe-S-bd"/>
</dbReference>
<dbReference type="InterPro" id="IPR017900">
    <property type="entry name" value="4Fe4S_Fe_S_CS"/>
</dbReference>
<dbReference type="InterPro" id="IPR050157">
    <property type="entry name" value="PSI_iron-sulfur_center"/>
</dbReference>
<dbReference type="InterPro" id="IPR017491">
    <property type="entry name" value="PSI_PsaC"/>
</dbReference>
<dbReference type="NCBIfam" id="TIGR03048">
    <property type="entry name" value="PS_I_psaC"/>
    <property type="match status" value="1"/>
</dbReference>
<dbReference type="PANTHER" id="PTHR24960:SF79">
    <property type="entry name" value="PHOTOSYSTEM I IRON-SULFUR CENTER"/>
    <property type="match status" value="1"/>
</dbReference>
<dbReference type="PANTHER" id="PTHR24960">
    <property type="entry name" value="PHOTOSYSTEM I IRON-SULFUR CENTER-RELATED"/>
    <property type="match status" value="1"/>
</dbReference>
<dbReference type="Pfam" id="PF12838">
    <property type="entry name" value="Fer4_7"/>
    <property type="match status" value="1"/>
</dbReference>
<dbReference type="SUPFAM" id="SSF54862">
    <property type="entry name" value="4Fe-4S ferredoxins"/>
    <property type="match status" value="1"/>
</dbReference>
<dbReference type="PROSITE" id="PS00198">
    <property type="entry name" value="4FE4S_FER_1"/>
    <property type="match status" value="2"/>
</dbReference>
<dbReference type="PROSITE" id="PS51379">
    <property type="entry name" value="4FE4S_FER_2"/>
    <property type="match status" value="2"/>
</dbReference>
<keyword id="KW-0004">4Fe-4S</keyword>
<keyword id="KW-0150">Chloroplast</keyword>
<keyword id="KW-0249">Electron transport</keyword>
<keyword id="KW-0408">Iron</keyword>
<keyword id="KW-0411">Iron-sulfur</keyword>
<keyword id="KW-0472">Membrane</keyword>
<keyword id="KW-0479">Metal-binding</keyword>
<keyword id="KW-0560">Oxidoreductase</keyword>
<keyword id="KW-0602">Photosynthesis</keyword>
<keyword id="KW-0603">Photosystem I</keyword>
<keyword id="KW-0934">Plastid</keyword>
<keyword id="KW-0677">Repeat</keyword>
<keyword id="KW-0793">Thylakoid</keyword>
<keyword id="KW-0813">Transport</keyword>
<reference key="1">
    <citation type="journal article" date="2005" name="Mol. Biol. Evol.">
        <title>Analysis of Acorus calamus chloroplast genome and its phylogenetic implications.</title>
        <authorList>
            <person name="Goremykin V.V."/>
            <person name="Holland B."/>
            <person name="Hirsch-Ernst K.I."/>
            <person name="Hellwig F.H."/>
        </authorList>
    </citation>
    <scope>NUCLEOTIDE SEQUENCE [LARGE SCALE GENOMIC DNA]</scope>
</reference>
<feature type="initiator methionine" description="Removed" evidence="1">
    <location>
        <position position="1"/>
    </location>
</feature>
<feature type="chain" id="PRO_0000292109" description="Photosystem I iron-sulfur center">
    <location>
        <begin position="2"/>
        <end position="81"/>
    </location>
</feature>
<feature type="domain" description="4Fe-4S ferredoxin-type 1" evidence="2">
    <location>
        <begin position="2"/>
        <end position="31"/>
    </location>
</feature>
<feature type="domain" description="4Fe-4S ferredoxin-type 2" evidence="2">
    <location>
        <begin position="39"/>
        <end position="68"/>
    </location>
</feature>
<feature type="binding site" evidence="2">
    <location>
        <position position="11"/>
    </location>
    <ligand>
        <name>[4Fe-4S] cluster</name>
        <dbReference type="ChEBI" id="CHEBI:49883"/>
        <label>1</label>
    </ligand>
</feature>
<feature type="binding site" evidence="2">
    <location>
        <position position="14"/>
    </location>
    <ligand>
        <name>[4Fe-4S] cluster</name>
        <dbReference type="ChEBI" id="CHEBI:49883"/>
        <label>1</label>
    </ligand>
</feature>
<feature type="binding site" evidence="2">
    <location>
        <position position="17"/>
    </location>
    <ligand>
        <name>[4Fe-4S] cluster</name>
        <dbReference type="ChEBI" id="CHEBI:49883"/>
        <label>1</label>
    </ligand>
</feature>
<feature type="binding site" evidence="2">
    <location>
        <position position="21"/>
    </location>
    <ligand>
        <name>[4Fe-4S] cluster</name>
        <dbReference type="ChEBI" id="CHEBI:49883"/>
        <label>2</label>
    </ligand>
</feature>
<feature type="binding site" evidence="2">
    <location>
        <position position="48"/>
    </location>
    <ligand>
        <name>[4Fe-4S] cluster</name>
        <dbReference type="ChEBI" id="CHEBI:49883"/>
        <label>2</label>
    </ligand>
</feature>
<feature type="binding site" evidence="2">
    <location>
        <position position="51"/>
    </location>
    <ligand>
        <name>[4Fe-4S] cluster</name>
        <dbReference type="ChEBI" id="CHEBI:49883"/>
        <label>2</label>
    </ligand>
</feature>
<feature type="binding site" evidence="2">
    <location>
        <position position="54"/>
    </location>
    <ligand>
        <name>[4Fe-4S] cluster</name>
        <dbReference type="ChEBI" id="CHEBI:49883"/>
        <label>2</label>
    </ligand>
</feature>
<feature type="binding site" evidence="2">
    <location>
        <position position="58"/>
    </location>
    <ligand>
        <name>[4Fe-4S] cluster</name>
        <dbReference type="ChEBI" id="CHEBI:49883"/>
        <label>1</label>
    </ligand>
</feature>
<gene>
    <name evidence="2" type="primary">psaC</name>
</gene>
<geneLocation type="chloroplast"/>
<organism>
    <name type="scientific">Acorus calamus</name>
    <name type="common">Sweet flag</name>
    <dbReference type="NCBI Taxonomy" id="4465"/>
    <lineage>
        <taxon>Eukaryota</taxon>
        <taxon>Viridiplantae</taxon>
        <taxon>Streptophyta</taxon>
        <taxon>Embryophyta</taxon>
        <taxon>Tracheophyta</taxon>
        <taxon>Spermatophyta</taxon>
        <taxon>Magnoliopsida</taxon>
        <taxon>Liliopsida</taxon>
        <taxon>Acoraceae</taxon>
        <taxon>Acorus</taxon>
    </lineage>
</organism>
<comment type="function">
    <text evidence="2">Apoprotein for the two 4Fe-4S centers FA and FB of photosystem I (PSI); essential for photochemical activity. FB is the terminal electron acceptor of PSI, donating electrons to ferredoxin. The C-terminus interacts with PsaA/B/D and helps assemble the protein into the PSI complex. Required for binding of PsaD and PsaE to PSI. PSI is a plastocyanin-ferredoxin oxidoreductase, converting photonic excitation into a charge separation, which transfers an electron from the donor P700 chlorophyll pair to the spectroscopically characterized acceptors A0, A1, FX, FA and FB in turn.</text>
</comment>
<comment type="catalytic activity">
    <reaction evidence="2">
        <text>reduced [plastocyanin] + hnu + oxidized [2Fe-2S]-[ferredoxin] = oxidized [plastocyanin] + reduced [2Fe-2S]-[ferredoxin]</text>
        <dbReference type="Rhea" id="RHEA:30407"/>
        <dbReference type="Rhea" id="RHEA-COMP:10000"/>
        <dbReference type="Rhea" id="RHEA-COMP:10001"/>
        <dbReference type="Rhea" id="RHEA-COMP:10039"/>
        <dbReference type="Rhea" id="RHEA-COMP:10040"/>
        <dbReference type="ChEBI" id="CHEBI:29036"/>
        <dbReference type="ChEBI" id="CHEBI:30212"/>
        <dbReference type="ChEBI" id="CHEBI:33737"/>
        <dbReference type="ChEBI" id="CHEBI:33738"/>
        <dbReference type="ChEBI" id="CHEBI:49552"/>
        <dbReference type="EC" id="1.97.1.12"/>
    </reaction>
</comment>
<comment type="cofactor">
    <cofactor evidence="2">
        <name>[4Fe-4S] cluster</name>
        <dbReference type="ChEBI" id="CHEBI:49883"/>
    </cofactor>
    <text evidence="2">Binds 2 [4Fe-4S] clusters. Cluster 2 is most probably the spectroscopically characterized electron acceptor FA and cluster 1 is most probably FB.</text>
</comment>
<comment type="subunit">
    <text evidence="2">The eukaryotic PSI reaction center is composed of at least 11 subunits.</text>
</comment>
<comment type="subcellular location">
    <subcellularLocation>
        <location evidence="2">Plastid</location>
        <location evidence="2">Chloroplast thylakoid membrane</location>
        <topology evidence="2">Peripheral membrane protein</topology>
        <orientation evidence="2">Stromal side</orientation>
    </subcellularLocation>
</comment>